<sequence>MSNRFAVILAAGKGTRMKSKLYKVLHPVCGKPMVQHVVDQVSQLGLQKLVTVVGHGAEMVQEQLGNVSEFALQAEQLGTAHAVDQAASVLANEEGTTLVICGDTPLITAETMEALLQQHKEAGAMATVLTAYIEEPAGYGRIVRNENGHVEKIVEHKDANEKELAIKEINTGTYCFDNKALFASLSKVSNDNVQGEYYLPDVIEILKNEGHIVSAYQTEHFDETLGVNDRVALSQAEIIMKNRINRKNMVNGVTIIDPSNTYISADAIIGSDTVLHPGTIIEGNTVIGSDCEIGPHTVIRDSEIGDRTTIRQSTVHDSKLGTEVSVGPFAHIRPDSVIGDEVRVGNFVEIKKTVFGNRSKASHLSYIGDAQVGEDVNLGCGSITVNYDGKNKFKTVIGNGVFIGCNSNLVAPVTVEDGAYVAAGSTITENVPSKALSVARARQVNKEDYVDQLLNKKKS</sequence>
<accession>B9IZD2</accession>
<feature type="chain" id="PRO_1000186403" description="Bifunctional protein GlmU">
    <location>
        <begin position="1"/>
        <end position="459"/>
    </location>
</feature>
<feature type="region of interest" description="Pyrophosphorylase" evidence="1">
    <location>
        <begin position="1"/>
        <end position="230"/>
    </location>
</feature>
<feature type="region of interest" description="Linker" evidence="1">
    <location>
        <begin position="231"/>
        <end position="251"/>
    </location>
</feature>
<feature type="region of interest" description="N-acetyltransferase" evidence="1">
    <location>
        <begin position="252"/>
        <end position="459"/>
    </location>
</feature>
<feature type="active site" description="Proton acceptor" evidence="1">
    <location>
        <position position="363"/>
    </location>
</feature>
<feature type="binding site" evidence="1">
    <location>
        <begin position="9"/>
        <end position="12"/>
    </location>
    <ligand>
        <name>UDP-N-acetyl-alpha-D-glucosamine</name>
        <dbReference type="ChEBI" id="CHEBI:57705"/>
    </ligand>
</feature>
<feature type="binding site" evidence="1">
    <location>
        <position position="23"/>
    </location>
    <ligand>
        <name>UDP-N-acetyl-alpha-D-glucosamine</name>
        <dbReference type="ChEBI" id="CHEBI:57705"/>
    </ligand>
</feature>
<feature type="binding site" evidence="1">
    <location>
        <position position="73"/>
    </location>
    <ligand>
        <name>UDP-N-acetyl-alpha-D-glucosamine</name>
        <dbReference type="ChEBI" id="CHEBI:57705"/>
    </ligand>
</feature>
<feature type="binding site" evidence="1">
    <location>
        <begin position="78"/>
        <end position="79"/>
    </location>
    <ligand>
        <name>UDP-N-acetyl-alpha-D-glucosamine</name>
        <dbReference type="ChEBI" id="CHEBI:57705"/>
    </ligand>
</feature>
<feature type="binding site" evidence="1">
    <location>
        <position position="103"/>
    </location>
    <ligand>
        <name>Mg(2+)</name>
        <dbReference type="ChEBI" id="CHEBI:18420"/>
    </ligand>
</feature>
<feature type="binding site" evidence="1">
    <location>
        <position position="140"/>
    </location>
    <ligand>
        <name>UDP-N-acetyl-alpha-D-glucosamine</name>
        <dbReference type="ChEBI" id="CHEBI:57705"/>
    </ligand>
</feature>
<feature type="binding site" evidence="1">
    <location>
        <position position="155"/>
    </location>
    <ligand>
        <name>UDP-N-acetyl-alpha-D-glucosamine</name>
        <dbReference type="ChEBI" id="CHEBI:57705"/>
    </ligand>
</feature>
<feature type="binding site" evidence="1">
    <location>
        <position position="170"/>
    </location>
    <ligand>
        <name>UDP-N-acetyl-alpha-D-glucosamine</name>
        <dbReference type="ChEBI" id="CHEBI:57705"/>
    </ligand>
</feature>
<feature type="binding site" evidence="1">
    <location>
        <position position="228"/>
    </location>
    <ligand>
        <name>Mg(2+)</name>
        <dbReference type="ChEBI" id="CHEBI:18420"/>
    </ligand>
</feature>
<feature type="binding site" evidence="1">
    <location>
        <position position="228"/>
    </location>
    <ligand>
        <name>UDP-N-acetyl-alpha-D-glucosamine</name>
        <dbReference type="ChEBI" id="CHEBI:57705"/>
    </ligand>
</feature>
<feature type="binding site" evidence="1">
    <location>
        <position position="333"/>
    </location>
    <ligand>
        <name>UDP-N-acetyl-alpha-D-glucosamine</name>
        <dbReference type="ChEBI" id="CHEBI:57705"/>
    </ligand>
</feature>
<feature type="binding site" evidence="1">
    <location>
        <position position="351"/>
    </location>
    <ligand>
        <name>UDP-N-acetyl-alpha-D-glucosamine</name>
        <dbReference type="ChEBI" id="CHEBI:57705"/>
    </ligand>
</feature>
<feature type="binding site" evidence="1">
    <location>
        <position position="366"/>
    </location>
    <ligand>
        <name>UDP-N-acetyl-alpha-D-glucosamine</name>
        <dbReference type="ChEBI" id="CHEBI:57705"/>
    </ligand>
</feature>
<feature type="binding site" evidence="1">
    <location>
        <position position="377"/>
    </location>
    <ligand>
        <name>UDP-N-acetyl-alpha-D-glucosamine</name>
        <dbReference type="ChEBI" id="CHEBI:57705"/>
    </ligand>
</feature>
<feature type="binding site" evidence="1">
    <location>
        <begin position="386"/>
        <end position="387"/>
    </location>
    <ligand>
        <name>acetyl-CoA</name>
        <dbReference type="ChEBI" id="CHEBI:57288"/>
    </ligand>
</feature>
<feature type="binding site" evidence="1">
    <location>
        <position position="423"/>
    </location>
    <ligand>
        <name>acetyl-CoA</name>
        <dbReference type="ChEBI" id="CHEBI:57288"/>
    </ligand>
</feature>
<feature type="binding site" evidence="1">
    <location>
        <position position="440"/>
    </location>
    <ligand>
        <name>acetyl-CoA</name>
        <dbReference type="ChEBI" id="CHEBI:57288"/>
    </ligand>
</feature>
<reference key="1">
    <citation type="journal article" date="2009" name="J. Bacteriol.">
        <title>Complete genome sequence of the extremophilic Bacillus cereus strain Q1 with industrial applications.</title>
        <authorList>
            <person name="Xiong Z."/>
            <person name="Jiang Y."/>
            <person name="Qi D."/>
            <person name="Lu H."/>
            <person name="Yang F."/>
            <person name="Yang J."/>
            <person name="Chen L."/>
            <person name="Sun L."/>
            <person name="Xu X."/>
            <person name="Xue Y."/>
            <person name="Zhu Y."/>
            <person name="Jin Q."/>
        </authorList>
    </citation>
    <scope>NUCLEOTIDE SEQUENCE [LARGE SCALE GENOMIC DNA]</scope>
    <source>
        <strain>Q1</strain>
    </source>
</reference>
<comment type="function">
    <text evidence="1">Catalyzes the last two sequential reactions in the de novo biosynthetic pathway for UDP-N-acetylglucosamine (UDP-GlcNAc). The C-terminal domain catalyzes the transfer of acetyl group from acetyl coenzyme A to glucosamine-1-phosphate (GlcN-1-P) to produce N-acetylglucosamine-1-phosphate (GlcNAc-1-P), which is converted into UDP-GlcNAc by the transfer of uridine 5-monophosphate (from uridine 5-triphosphate), a reaction catalyzed by the N-terminal domain.</text>
</comment>
<comment type="catalytic activity">
    <reaction evidence="1">
        <text>alpha-D-glucosamine 1-phosphate + acetyl-CoA = N-acetyl-alpha-D-glucosamine 1-phosphate + CoA + H(+)</text>
        <dbReference type="Rhea" id="RHEA:13725"/>
        <dbReference type="ChEBI" id="CHEBI:15378"/>
        <dbReference type="ChEBI" id="CHEBI:57287"/>
        <dbReference type="ChEBI" id="CHEBI:57288"/>
        <dbReference type="ChEBI" id="CHEBI:57776"/>
        <dbReference type="ChEBI" id="CHEBI:58516"/>
        <dbReference type="EC" id="2.3.1.157"/>
    </reaction>
</comment>
<comment type="catalytic activity">
    <reaction evidence="1">
        <text>N-acetyl-alpha-D-glucosamine 1-phosphate + UTP + H(+) = UDP-N-acetyl-alpha-D-glucosamine + diphosphate</text>
        <dbReference type="Rhea" id="RHEA:13509"/>
        <dbReference type="ChEBI" id="CHEBI:15378"/>
        <dbReference type="ChEBI" id="CHEBI:33019"/>
        <dbReference type="ChEBI" id="CHEBI:46398"/>
        <dbReference type="ChEBI" id="CHEBI:57705"/>
        <dbReference type="ChEBI" id="CHEBI:57776"/>
        <dbReference type="EC" id="2.7.7.23"/>
    </reaction>
</comment>
<comment type="cofactor">
    <cofactor evidence="1">
        <name>Mg(2+)</name>
        <dbReference type="ChEBI" id="CHEBI:18420"/>
    </cofactor>
    <text evidence="1">Binds 1 Mg(2+) ion per subunit.</text>
</comment>
<comment type="pathway">
    <text evidence="1">Nucleotide-sugar biosynthesis; UDP-N-acetyl-alpha-D-glucosamine biosynthesis; N-acetyl-alpha-D-glucosamine 1-phosphate from alpha-D-glucosamine 6-phosphate (route II): step 2/2.</text>
</comment>
<comment type="pathway">
    <text evidence="1">Nucleotide-sugar biosynthesis; UDP-N-acetyl-alpha-D-glucosamine biosynthesis; UDP-N-acetyl-alpha-D-glucosamine from N-acetyl-alpha-D-glucosamine 1-phosphate: step 1/1.</text>
</comment>
<comment type="pathway">
    <text evidence="1">Bacterial outer membrane biogenesis; LPS lipid A biosynthesis.</text>
</comment>
<comment type="subunit">
    <text evidence="1">Homotrimer.</text>
</comment>
<comment type="subcellular location">
    <subcellularLocation>
        <location evidence="1">Cytoplasm</location>
    </subcellularLocation>
</comment>
<comment type="similarity">
    <text evidence="1">In the N-terminal section; belongs to the N-acetylglucosamine-1-phosphate uridyltransferase family.</text>
</comment>
<comment type="similarity">
    <text evidence="1">In the C-terminal section; belongs to the transferase hexapeptide repeat family.</text>
</comment>
<evidence type="ECO:0000255" key="1">
    <source>
        <dbReference type="HAMAP-Rule" id="MF_01631"/>
    </source>
</evidence>
<protein>
    <recommendedName>
        <fullName evidence="1">Bifunctional protein GlmU</fullName>
    </recommendedName>
    <domain>
        <recommendedName>
            <fullName evidence="1">UDP-N-acetylglucosamine pyrophosphorylase</fullName>
            <ecNumber evidence="1">2.7.7.23</ecNumber>
        </recommendedName>
        <alternativeName>
            <fullName evidence="1">N-acetylglucosamine-1-phosphate uridyltransferase</fullName>
        </alternativeName>
    </domain>
    <domain>
        <recommendedName>
            <fullName evidence="1">Glucosamine-1-phosphate N-acetyltransferase</fullName>
            <ecNumber evidence="1">2.3.1.157</ecNumber>
        </recommendedName>
    </domain>
</protein>
<organism>
    <name type="scientific">Bacillus cereus (strain Q1)</name>
    <dbReference type="NCBI Taxonomy" id="361100"/>
    <lineage>
        <taxon>Bacteria</taxon>
        <taxon>Bacillati</taxon>
        <taxon>Bacillota</taxon>
        <taxon>Bacilli</taxon>
        <taxon>Bacillales</taxon>
        <taxon>Bacillaceae</taxon>
        <taxon>Bacillus</taxon>
        <taxon>Bacillus cereus group</taxon>
    </lineage>
</organism>
<dbReference type="EC" id="2.7.7.23" evidence="1"/>
<dbReference type="EC" id="2.3.1.157" evidence="1"/>
<dbReference type="EMBL" id="CP000227">
    <property type="protein sequence ID" value="ACM10576.1"/>
    <property type="molecule type" value="Genomic_DNA"/>
</dbReference>
<dbReference type="SMR" id="B9IZD2"/>
<dbReference type="KEGG" id="bcq:BCQ_0056"/>
<dbReference type="HOGENOM" id="CLU_029499_15_2_9"/>
<dbReference type="UniPathway" id="UPA00113">
    <property type="reaction ID" value="UER00532"/>
</dbReference>
<dbReference type="UniPathway" id="UPA00113">
    <property type="reaction ID" value="UER00533"/>
</dbReference>
<dbReference type="UniPathway" id="UPA00973"/>
<dbReference type="Proteomes" id="UP000000441">
    <property type="component" value="Chromosome"/>
</dbReference>
<dbReference type="GO" id="GO:0005737">
    <property type="term" value="C:cytoplasm"/>
    <property type="evidence" value="ECO:0007669"/>
    <property type="project" value="UniProtKB-SubCell"/>
</dbReference>
<dbReference type="GO" id="GO:0016020">
    <property type="term" value="C:membrane"/>
    <property type="evidence" value="ECO:0007669"/>
    <property type="project" value="GOC"/>
</dbReference>
<dbReference type="GO" id="GO:0019134">
    <property type="term" value="F:glucosamine-1-phosphate N-acetyltransferase activity"/>
    <property type="evidence" value="ECO:0007669"/>
    <property type="project" value="UniProtKB-UniRule"/>
</dbReference>
<dbReference type="GO" id="GO:0000287">
    <property type="term" value="F:magnesium ion binding"/>
    <property type="evidence" value="ECO:0007669"/>
    <property type="project" value="UniProtKB-UniRule"/>
</dbReference>
<dbReference type="GO" id="GO:0003977">
    <property type="term" value="F:UDP-N-acetylglucosamine diphosphorylase activity"/>
    <property type="evidence" value="ECO:0007669"/>
    <property type="project" value="UniProtKB-UniRule"/>
</dbReference>
<dbReference type="GO" id="GO:0000902">
    <property type="term" value="P:cell morphogenesis"/>
    <property type="evidence" value="ECO:0007669"/>
    <property type="project" value="UniProtKB-UniRule"/>
</dbReference>
<dbReference type="GO" id="GO:0071555">
    <property type="term" value="P:cell wall organization"/>
    <property type="evidence" value="ECO:0007669"/>
    <property type="project" value="UniProtKB-KW"/>
</dbReference>
<dbReference type="GO" id="GO:0009245">
    <property type="term" value="P:lipid A biosynthetic process"/>
    <property type="evidence" value="ECO:0007669"/>
    <property type="project" value="UniProtKB-UniRule"/>
</dbReference>
<dbReference type="GO" id="GO:0009252">
    <property type="term" value="P:peptidoglycan biosynthetic process"/>
    <property type="evidence" value="ECO:0007669"/>
    <property type="project" value="UniProtKB-UniRule"/>
</dbReference>
<dbReference type="GO" id="GO:0008360">
    <property type="term" value="P:regulation of cell shape"/>
    <property type="evidence" value="ECO:0007669"/>
    <property type="project" value="UniProtKB-KW"/>
</dbReference>
<dbReference type="GO" id="GO:0006048">
    <property type="term" value="P:UDP-N-acetylglucosamine biosynthetic process"/>
    <property type="evidence" value="ECO:0007669"/>
    <property type="project" value="UniProtKB-UniPathway"/>
</dbReference>
<dbReference type="CDD" id="cd02540">
    <property type="entry name" value="GT2_GlmU_N_bac"/>
    <property type="match status" value="1"/>
</dbReference>
<dbReference type="CDD" id="cd03353">
    <property type="entry name" value="LbH_GlmU_C"/>
    <property type="match status" value="1"/>
</dbReference>
<dbReference type="FunFam" id="2.160.10.10:FF:000016">
    <property type="entry name" value="Bifunctional protein GlmU"/>
    <property type="match status" value="1"/>
</dbReference>
<dbReference type="FunFam" id="3.90.550.10:FF:000006">
    <property type="entry name" value="Bifunctional protein GlmU"/>
    <property type="match status" value="1"/>
</dbReference>
<dbReference type="Gene3D" id="2.160.10.10">
    <property type="entry name" value="Hexapeptide repeat proteins"/>
    <property type="match status" value="1"/>
</dbReference>
<dbReference type="Gene3D" id="3.90.550.10">
    <property type="entry name" value="Spore Coat Polysaccharide Biosynthesis Protein SpsA, Chain A"/>
    <property type="match status" value="1"/>
</dbReference>
<dbReference type="HAMAP" id="MF_01631">
    <property type="entry name" value="GlmU"/>
    <property type="match status" value="1"/>
</dbReference>
<dbReference type="InterPro" id="IPR005882">
    <property type="entry name" value="Bifunctional_GlmU"/>
</dbReference>
<dbReference type="InterPro" id="IPR050065">
    <property type="entry name" value="GlmU-like"/>
</dbReference>
<dbReference type="InterPro" id="IPR038009">
    <property type="entry name" value="GlmU_C_LbH"/>
</dbReference>
<dbReference type="InterPro" id="IPR001451">
    <property type="entry name" value="Hexapep"/>
</dbReference>
<dbReference type="InterPro" id="IPR018357">
    <property type="entry name" value="Hexapep_transf_CS"/>
</dbReference>
<dbReference type="InterPro" id="IPR005835">
    <property type="entry name" value="NTP_transferase_dom"/>
</dbReference>
<dbReference type="InterPro" id="IPR029044">
    <property type="entry name" value="Nucleotide-diphossugar_trans"/>
</dbReference>
<dbReference type="InterPro" id="IPR011004">
    <property type="entry name" value="Trimer_LpxA-like_sf"/>
</dbReference>
<dbReference type="NCBIfam" id="TIGR01173">
    <property type="entry name" value="glmU"/>
    <property type="match status" value="1"/>
</dbReference>
<dbReference type="NCBIfam" id="NF010934">
    <property type="entry name" value="PRK14354.1"/>
    <property type="match status" value="1"/>
</dbReference>
<dbReference type="PANTHER" id="PTHR43584:SF3">
    <property type="entry name" value="BIFUNCTIONAL PROTEIN GLMU"/>
    <property type="match status" value="1"/>
</dbReference>
<dbReference type="PANTHER" id="PTHR43584">
    <property type="entry name" value="NUCLEOTIDYL TRANSFERASE"/>
    <property type="match status" value="1"/>
</dbReference>
<dbReference type="Pfam" id="PF00132">
    <property type="entry name" value="Hexapep"/>
    <property type="match status" value="3"/>
</dbReference>
<dbReference type="Pfam" id="PF00483">
    <property type="entry name" value="NTP_transferase"/>
    <property type="match status" value="1"/>
</dbReference>
<dbReference type="SUPFAM" id="SSF53448">
    <property type="entry name" value="Nucleotide-diphospho-sugar transferases"/>
    <property type="match status" value="1"/>
</dbReference>
<dbReference type="SUPFAM" id="SSF51161">
    <property type="entry name" value="Trimeric LpxA-like enzymes"/>
    <property type="match status" value="1"/>
</dbReference>
<dbReference type="PROSITE" id="PS00101">
    <property type="entry name" value="HEXAPEP_TRANSFERASES"/>
    <property type="match status" value="1"/>
</dbReference>
<keyword id="KW-0012">Acyltransferase</keyword>
<keyword id="KW-0133">Cell shape</keyword>
<keyword id="KW-0961">Cell wall biogenesis/degradation</keyword>
<keyword id="KW-0963">Cytoplasm</keyword>
<keyword id="KW-0460">Magnesium</keyword>
<keyword id="KW-0479">Metal-binding</keyword>
<keyword id="KW-0511">Multifunctional enzyme</keyword>
<keyword id="KW-0548">Nucleotidyltransferase</keyword>
<keyword id="KW-0573">Peptidoglycan synthesis</keyword>
<keyword id="KW-0677">Repeat</keyword>
<keyword id="KW-0808">Transferase</keyword>
<proteinExistence type="inferred from homology"/>
<name>GLMU_BACCQ</name>
<gene>
    <name evidence="1" type="primary">glmU</name>
    <name type="ordered locus">BCQ_0056</name>
</gene>